<protein>
    <recommendedName>
        <fullName evidence="2">Uncharacterized protein SMPP4</fullName>
    </recommendedName>
</protein>
<feature type="chain" id="PRO_0000371485" description="Uncharacterized protein SMPP4">
    <location>
        <begin position="1" status="less than"/>
        <end position="12" status="greater than"/>
    </location>
</feature>
<feature type="unsure residue" description="L or I" evidence="1">
    <location>
        <position position="7"/>
    </location>
</feature>
<feature type="unsure residue" description="L or I" evidence="1">
    <location>
        <position position="9"/>
    </location>
</feature>
<feature type="non-terminal residue" evidence="2">
    <location>
        <position position="1"/>
    </location>
</feature>
<feature type="non-terminal residue" evidence="2">
    <location>
        <position position="12"/>
    </location>
</feature>
<comment type="tissue specificity">
    <text evidence="1">Nacreous layer of shell.</text>
</comment>
<sequence length="12" mass="1359">DMYSDNLGLCDN</sequence>
<reference key="1">
    <citation type="journal article" date="2009" name="ChemBioChem">
        <title>Evolution of nacre: biochemistry and 'shellomics' of the shell organic matrix of the cephalopod Nautilus macromphalus.</title>
        <authorList>
            <person name="Marie B."/>
            <person name="Marin F."/>
            <person name="Marie A."/>
            <person name="Bedouet L."/>
            <person name="Dubost L."/>
            <person name="Alcaraz G."/>
            <person name="Milet C."/>
            <person name="Luquet G."/>
        </authorList>
    </citation>
    <scope>PROTEIN SEQUENCE</scope>
    <scope>TISSUE SPECIFICITY</scope>
    <source>
        <tissue>Shell</tissue>
    </source>
</reference>
<proteinExistence type="evidence at protein level"/>
<accession>P85391</accession>
<organism>
    <name type="scientific">Nautilus macromphalus</name>
    <name type="common">Bellybutton nautilus</name>
    <dbReference type="NCBI Taxonomy" id="34576"/>
    <lineage>
        <taxon>Eukaryota</taxon>
        <taxon>Metazoa</taxon>
        <taxon>Spiralia</taxon>
        <taxon>Lophotrochozoa</taxon>
        <taxon>Mollusca</taxon>
        <taxon>Cephalopoda</taxon>
        <taxon>Nautiloidea</taxon>
        <taxon>Nautilida</taxon>
        <taxon>Nautilidae</taxon>
        <taxon>Nautilus</taxon>
    </lineage>
</organism>
<evidence type="ECO:0000269" key="1">
    <source>
    </source>
</evidence>
<evidence type="ECO:0000303" key="2">
    <source>
    </source>
</evidence>
<name>SMP04_NAUMA</name>
<keyword id="KW-0903">Direct protein sequencing</keyword>